<protein>
    <recommendedName>
        <fullName evidence="1">Glucose-1-phosphate adenylyltransferase</fullName>
        <ecNumber evidence="1">2.7.7.27</ecNumber>
    </recommendedName>
    <alternativeName>
        <fullName evidence="1">ADP-glucose pyrophosphorylase</fullName>
        <shortName evidence="1">ADPGlc PPase</shortName>
    </alternativeName>
    <alternativeName>
        <fullName evidence="1">ADP-glucose synthase</fullName>
    </alternativeName>
</protein>
<organism>
    <name type="scientific">Agrobacterium fabrum (strain C58 / ATCC 33970)</name>
    <name type="common">Agrobacterium tumefaciens (strain C58)</name>
    <dbReference type="NCBI Taxonomy" id="176299"/>
    <lineage>
        <taxon>Bacteria</taxon>
        <taxon>Pseudomonadati</taxon>
        <taxon>Pseudomonadota</taxon>
        <taxon>Alphaproteobacteria</taxon>
        <taxon>Hyphomicrobiales</taxon>
        <taxon>Rhizobiaceae</taxon>
        <taxon>Rhizobium/Agrobacterium group</taxon>
        <taxon>Agrobacterium</taxon>
        <taxon>Agrobacterium tumefaciens complex</taxon>
    </lineage>
</organism>
<keyword id="KW-0002">3D-structure</keyword>
<keyword id="KW-0067">ATP-binding</keyword>
<keyword id="KW-0119">Carbohydrate metabolism</keyword>
<keyword id="KW-0320">Glycogen biosynthesis</keyword>
<keyword id="KW-0321">Glycogen metabolism</keyword>
<keyword id="KW-0547">Nucleotide-binding</keyword>
<keyword id="KW-0548">Nucleotidyltransferase</keyword>
<keyword id="KW-1185">Reference proteome</keyword>
<keyword id="KW-0808">Transferase</keyword>
<proteinExistence type="evidence at protein level"/>
<evidence type="ECO:0000255" key="1">
    <source>
        <dbReference type="HAMAP-Rule" id="MF_00624"/>
    </source>
</evidence>
<evidence type="ECO:0007829" key="2">
    <source>
        <dbReference type="PDB" id="6V96"/>
    </source>
</evidence>
<evidence type="ECO:0007829" key="3">
    <source>
        <dbReference type="PDB" id="6V99"/>
    </source>
</evidence>
<reference key="1">
    <citation type="journal article" date="2001" name="Science">
        <title>The genome of the natural genetic engineer Agrobacterium tumefaciens C58.</title>
        <authorList>
            <person name="Wood D.W."/>
            <person name="Setubal J.C."/>
            <person name="Kaul R."/>
            <person name="Monks D.E."/>
            <person name="Kitajima J.P."/>
            <person name="Okura V.K."/>
            <person name="Zhou Y."/>
            <person name="Chen L."/>
            <person name="Wood G.E."/>
            <person name="Almeida N.F. Jr."/>
            <person name="Woo L."/>
            <person name="Chen Y."/>
            <person name="Paulsen I.T."/>
            <person name="Eisen J.A."/>
            <person name="Karp P.D."/>
            <person name="Bovee D. Sr."/>
            <person name="Chapman P."/>
            <person name="Clendenning J."/>
            <person name="Deatherage G."/>
            <person name="Gillet W."/>
            <person name="Grant C."/>
            <person name="Kutyavin T."/>
            <person name="Levy R."/>
            <person name="Li M.-J."/>
            <person name="McClelland E."/>
            <person name="Palmieri A."/>
            <person name="Raymond C."/>
            <person name="Rouse G."/>
            <person name="Saenphimmachak C."/>
            <person name="Wu Z."/>
            <person name="Romero P."/>
            <person name="Gordon D."/>
            <person name="Zhang S."/>
            <person name="Yoo H."/>
            <person name="Tao Y."/>
            <person name="Biddle P."/>
            <person name="Jung M."/>
            <person name="Krespan W."/>
            <person name="Perry M."/>
            <person name="Gordon-Kamm B."/>
            <person name="Liao L."/>
            <person name="Kim S."/>
            <person name="Hendrick C."/>
            <person name="Zhao Z.-Y."/>
            <person name="Dolan M."/>
            <person name="Chumley F."/>
            <person name="Tingey S.V."/>
            <person name="Tomb J.-F."/>
            <person name="Gordon M.P."/>
            <person name="Olson M.V."/>
            <person name="Nester E.W."/>
        </authorList>
    </citation>
    <scope>NUCLEOTIDE SEQUENCE [LARGE SCALE GENOMIC DNA]</scope>
    <source>
        <strain>C58 / ATCC 33970</strain>
    </source>
</reference>
<reference key="2">
    <citation type="journal article" date="2001" name="Science">
        <title>Genome sequence of the plant pathogen and biotechnology agent Agrobacterium tumefaciens C58.</title>
        <authorList>
            <person name="Goodner B."/>
            <person name="Hinkle G."/>
            <person name="Gattung S."/>
            <person name="Miller N."/>
            <person name="Blanchard M."/>
            <person name="Qurollo B."/>
            <person name="Goldman B.S."/>
            <person name="Cao Y."/>
            <person name="Askenazi M."/>
            <person name="Halling C."/>
            <person name="Mullin L."/>
            <person name="Houmiel K."/>
            <person name="Gordon J."/>
            <person name="Vaudin M."/>
            <person name="Iartchouk O."/>
            <person name="Epp A."/>
            <person name="Liu F."/>
            <person name="Wollam C."/>
            <person name="Allinger M."/>
            <person name="Doughty D."/>
            <person name="Scott C."/>
            <person name="Lappas C."/>
            <person name="Markelz B."/>
            <person name="Flanagan C."/>
            <person name="Crowell C."/>
            <person name="Gurson J."/>
            <person name="Lomo C."/>
            <person name="Sear C."/>
            <person name="Strub G."/>
            <person name="Cielo C."/>
            <person name="Slater S."/>
        </authorList>
    </citation>
    <scope>NUCLEOTIDE SEQUENCE [LARGE SCALE GENOMIC DNA]</scope>
    <source>
        <strain>C58 / ATCC 33970</strain>
    </source>
</reference>
<accession>Q8U8L5</accession>
<dbReference type="EC" id="2.7.7.27" evidence="1"/>
<dbReference type="EMBL" id="AE007870">
    <property type="protein sequence ID" value="AAK89353.1"/>
    <property type="molecule type" value="Genomic_DNA"/>
</dbReference>
<dbReference type="PIR" id="AG3057">
    <property type="entry name" value="AG3057"/>
</dbReference>
<dbReference type="PIR" id="G98228">
    <property type="entry name" value="G98228"/>
</dbReference>
<dbReference type="RefSeq" id="NP_356568.1">
    <property type="nucleotide sequence ID" value="NC_003063.2"/>
</dbReference>
<dbReference type="RefSeq" id="WP_006313778.1">
    <property type="nucleotide sequence ID" value="NC_003063.2"/>
</dbReference>
<dbReference type="PDB" id="6V96">
    <property type="method" value="X-ray"/>
    <property type="resolution" value="1.80 A"/>
    <property type="chains" value="A/B/C/D/E/F/G/H/I/J/K/L/M/N/O/P/Q/R/T/V=1-420"/>
</dbReference>
<dbReference type="PDB" id="6V99">
    <property type="method" value="X-ray"/>
    <property type="resolution" value="2.29 A"/>
    <property type="chains" value="A/B/C/D/E/F/G/H/I/J/K/L/M/N/O/P/Q/R/T/W=1-420"/>
</dbReference>
<dbReference type="PDB" id="6V9A">
    <property type="method" value="X-ray"/>
    <property type="resolution" value="2.30 A"/>
    <property type="chains" value="A/B/C/D/E/F/G/H/I/J/K/L/M/N/O/P/Q/R/T/V=1-420"/>
</dbReference>
<dbReference type="PDBsum" id="6V96"/>
<dbReference type="PDBsum" id="6V99"/>
<dbReference type="PDBsum" id="6V9A"/>
<dbReference type="SMR" id="Q8U8L5"/>
<dbReference type="STRING" id="176299.Atu4076"/>
<dbReference type="EnsemblBacteria" id="AAK89353">
    <property type="protein sequence ID" value="AAK89353"/>
    <property type="gene ID" value="Atu4076"/>
</dbReference>
<dbReference type="GeneID" id="1135950"/>
<dbReference type="KEGG" id="atu:Atu4076"/>
<dbReference type="PATRIC" id="fig|176299.10.peg.3893"/>
<dbReference type="eggNOG" id="COG0448">
    <property type="taxonomic scope" value="Bacteria"/>
</dbReference>
<dbReference type="HOGENOM" id="CLU_029499_14_1_5"/>
<dbReference type="OrthoDB" id="9801810at2"/>
<dbReference type="PhylomeDB" id="Q8U8L5"/>
<dbReference type="BioCyc" id="AGRO:ATU4076-MONOMER"/>
<dbReference type="UniPathway" id="UPA00164"/>
<dbReference type="Proteomes" id="UP000000813">
    <property type="component" value="Chromosome linear"/>
</dbReference>
<dbReference type="GO" id="GO:0005524">
    <property type="term" value="F:ATP binding"/>
    <property type="evidence" value="ECO:0007669"/>
    <property type="project" value="UniProtKB-KW"/>
</dbReference>
<dbReference type="GO" id="GO:0008878">
    <property type="term" value="F:glucose-1-phosphate adenylyltransferase activity"/>
    <property type="evidence" value="ECO:0007669"/>
    <property type="project" value="UniProtKB-UniRule"/>
</dbReference>
<dbReference type="GO" id="GO:0005978">
    <property type="term" value="P:glycogen biosynthetic process"/>
    <property type="evidence" value="ECO:0007669"/>
    <property type="project" value="UniProtKB-UniRule"/>
</dbReference>
<dbReference type="CDD" id="cd02508">
    <property type="entry name" value="ADP_Glucose_PP"/>
    <property type="match status" value="1"/>
</dbReference>
<dbReference type="CDD" id="cd04651">
    <property type="entry name" value="LbH_G1P_AT_C"/>
    <property type="match status" value="1"/>
</dbReference>
<dbReference type="Gene3D" id="2.160.10.10">
    <property type="entry name" value="Hexapeptide repeat proteins"/>
    <property type="match status" value="1"/>
</dbReference>
<dbReference type="Gene3D" id="3.90.550.10">
    <property type="entry name" value="Spore Coat Polysaccharide Biosynthesis Protein SpsA, Chain A"/>
    <property type="match status" value="1"/>
</dbReference>
<dbReference type="HAMAP" id="MF_00624">
    <property type="entry name" value="GlgC"/>
    <property type="match status" value="1"/>
</dbReference>
<dbReference type="InterPro" id="IPR011831">
    <property type="entry name" value="ADP-Glc_PPase"/>
</dbReference>
<dbReference type="InterPro" id="IPR005836">
    <property type="entry name" value="ADP_Glu_pyroP_CS"/>
</dbReference>
<dbReference type="InterPro" id="IPR023049">
    <property type="entry name" value="GlgC_bac"/>
</dbReference>
<dbReference type="InterPro" id="IPR056818">
    <property type="entry name" value="GlmU/GlgC-like_hexapep"/>
</dbReference>
<dbReference type="InterPro" id="IPR005835">
    <property type="entry name" value="NTP_transferase_dom"/>
</dbReference>
<dbReference type="InterPro" id="IPR029044">
    <property type="entry name" value="Nucleotide-diphossugar_trans"/>
</dbReference>
<dbReference type="InterPro" id="IPR011004">
    <property type="entry name" value="Trimer_LpxA-like_sf"/>
</dbReference>
<dbReference type="NCBIfam" id="TIGR02091">
    <property type="entry name" value="glgC"/>
    <property type="match status" value="1"/>
</dbReference>
<dbReference type="NCBIfam" id="NF001947">
    <property type="entry name" value="PRK00725.1"/>
    <property type="match status" value="1"/>
</dbReference>
<dbReference type="NCBIfam" id="NF002023">
    <property type="entry name" value="PRK00844.1"/>
    <property type="match status" value="1"/>
</dbReference>
<dbReference type="PANTHER" id="PTHR43523:SF2">
    <property type="entry name" value="GLUCOSE-1-PHOSPHATE ADENYLYLTRANSFERASE"/>
    <property type="match status" value="1"/>
</dbReference>
<dbReference type="PANTHER" id="PTHR43523">
    <property type="entry name" value="GLUCOSE-1-PHOSPHATE ADENYLYLTRANSFERASE-RELATED"/>
    <property type="match status" value="1"/>
</dbReference>
<dbReference type="Pfam" id="PF24894">
    <property type="entry name" value="Hexapep_GlmU"/>
    <property type="match status" value="1"/>
</dbReference>
<dbReference type="Pfam" id="PF00483">
    <property type="entry name" value="NTP_transferase"/>
    <property type="match status" value="1"/>
</dbReference>
<dbReference type="SUPFAM" id="SSF53448">
    <property type="entry name" value="Nucleotide-diphospho-sugar transferases"/>
    <property type="match status" value="1"/>
</dbReference>
<dbReference type="SUPFAM" id="SSF51161">
    <property type="entry name" value="Trimeric LpxA-like enzymes"/>
    <property type="match status" value="1"/>
</dbReference>
<dbReference type="PROSITE" id="PS00808">
    <property type="entry name" value="ADP_GLC_PYROPHOSPH_1"/>
    <property type="match status" value="1"/>
</dbReference>
<dbReference type="PROSITE" id="PS00809">
    <property type="entry name" value="ADP_GLC_PYROPHOSPH_2"/>
    <property type="match status" value="1"/>
</dbReference>
<dbReference type="PROSITE" id="PS00810">
    <property type="entry name" value="ADP_GLC_PYROPHOSPH_3"/>
    <property type="match status" value="1"/>
</dbReference>
<name>GLGC_AGRFC</name>
<gene>
    <name evidence="1" type="primary">glgC</name>
    <name type="ordered locus">Atu4076</name>
    <name type="ORF">AGR_L_1560</name>
</gene>
<comment type="function">
    <text evidence="1">Involved in the biosynthesis of ADP-glucose, a building block required for the elongation reactions to produce glycogen. Catalyzes the reaction between ATP and alpha-D-glucose 1-phosphate (G1P) to produce pyrophosphate and ADP-Glc.</text>
</comment>
<comment type="catalytic activity">
    <reaction evidence="1">
        <text>alpha-D-glucose 1-phosphate + ATP + H(+) = ADP-alpha-D-glucose + diphosphate</text>
        <dbReference type="Rhea" id="RHEA:12120"/>
        <dbReference type="ChEBI" id="CHEBI:15378"/>
        <dbReference type="ChEBI" id="CHEBI:30616"/>
        <dbReference type="ChEBI" id="CHEBI:33019"/>
        <dbReference type="ChEBI" id="CHEBI:57498"/>
        <dbReference type="ChEBI" id="CHEBI:58601"/>
        <dbReference type="EC" id="2.7.7.27"/>
    </reaction>
</comment>
<comment type="pathway">
    <text evidence="1">Glycan biosynthesis; glycogen biosynthesis.</text>
</comment>
<comment type="subunit">
    <text evidence="1">Homotetramer.</text>
</comment>
<comment type="similarity">
    <text evidence="1">Belongs to the bacterial/plant glucose-1-phosphate adenylyltransferase family.</text>
</comment>
<sequence>MSEKRVQPLARDAMAYVLAGGRGSRLKELTDRRAKPAVYFGGKARIIDFALSNALNSGIRRIGVATQYKAHSLIRHLQRGWDFFRPERNESFDILPASQRVSETQWYEGTADAVYQNIDIIEPYAPEYMVILAGDHIYKMDYEYMLQQHVDSGADVTIGCLEVPRMEATGFGVMHVNEKDEIIDFIEKPADPPGIPGNEGFALASMGIYVFHTKFLMEALRRDAADPTSSRDFGKDIIPYIVEHGKAVAHRFADSCVRSDFEHEPYWRDVGTIDAYWQANIDLTDVVPDLDIYDKSWPIWTYAEITPPAKFVHDDEDRRGSAVSSVVSGDCIISGAALNRSLLFTGVRANSYSRLENAVVLPSVKIGRHAQLSNVVIDHGVVIPEGLIVGEDPELDAKRFRRTESGICLITQSMIDKLDL</sequence>
<feature type="chain" id="PRO_0000195271" description="Glucose-1-phosphate adenylyltransferase">
    <location>
        <begin position="1"/>
        <end position="420"/>
    </location>
</feature>
<feature type="binding site" evidence="1">
    <location>
        <position position="107"/>
    </location>
    <ligand>
        <name>alpha-D-glucose 1-phosphate</name>
        <dbReference type="ChEBI" id="CHEBI:58601"/>
    </ligand>
</feature>
<feature type="binding site" evidence="1">
    <location>
        <position position="172"/>
    </location>
    <ligand>
        <name>alpha-D-glucose 1-phosphate</name>
        <dbReference type="ChEBI" id="CHEBI:58601"/>
    </ligand>
</feature>
<feature type="binding site" evidence="1">
    <location>
        <begin position="187"/>
        <end position="188"/>
    </location>
    <ligand>
        <name>alpha-D-glucose 1-phosphate</name>
        <dbReference type="ChEBI" id="CHEBI:58601"/>
    </ligand>
</feature>
<feature type="binding site" evidence="1">
    <location>
        <position position="205"/>
    </location>
    <ligand>
        <name>alpha-D-glucose 1-phosphate</name>
        <dbReference type="ChEBI" id="CHEBI:58601"/>
    </ligand>
</feature>
<feature type="helix" evidence="2">
    <location>
        <begin position="9"/>
        <end position="12"/>
    </location>
</feature>
<feature type="strand" evidence="2">
    <location>
        <begin position="13"/>
        <end position="19"/>
    </location>
</feature>
<feature type="helix" evidence="2">
    <location>
        <begin position="24"/>
        <end position="30"/>
    </location>
</feature>
<feature type="strand" evidence="2">
    <location>
        <begin position="31"/>
        <end position="33"/>
    </location>
</feature>
<feature type="helix" evidence="2">
    <location>
        <begin position="35"/>
        <end position="37"/>
    </location>
</feature>
<feature type="strand" evidence="2">
    <location>
        <begin position="38"/>
        <end position="40"/>
    </location>
</feature>
<feature type="turn" evidence="2">
    <location>
        <begin position="41"/>
        <end position="43"/>
    </location>
</feature>
<feature type="helix" evidence="2">
    <location>
        <begin position="48"/>
        <end position="56"/>
    </location>
</feature>
<feature type="strand" evidence="2">
    <location>
        <begin position="61"/>
        <end position="66"/>
    </location>
</feature>
<feature type="helix" evidence="2">
    <location>
        <begin position="71"/>
        <end position="80"/>
    </location>
</feature>
<feature type="helix" evidence="2">
    <location>
        <begin position="86"/>
        <end position="88"/>
    </location>
</feature>
<feature type="strand" evidence="2">
    <location>
        <begin position="91"/>
        <end position="97"/>
    </location>
</feature>
<feature type="strand" evidence="3">
    <location>
        <begin position="100"/>
        <end position="102"/>
    </location>
</feature>
<feature type="helix" evidence="2">
    <location>
        <begin position="110"/>
        <end position="115"/>
    </location>
</feature>
<feature type="helix" evidence="2">
    <location>
        <begin position="118"/>
        <end position="121"/>
    </location>
</feature>
<feature type="helix" evidence="2">
    <location>
        <begin position="122"/>
        <end position="124"/>
    </location>
</feature>
<feature type="strand" evidence="2">
    <location>
        <begin position="127"/>
        <end position="135"/>
    </location>
</feature>
<feature type="helix" evidence="2">
    <location>
        <begin position="142"/>
        <end position="152"/>
    </location>
</feature>
<feature type="strand" evidence="2">
    <location>
        <begin position="155"/>
        <end position="164"/>
    </location>
</feature>
<feature type="helix" evidence="2">
    <location>
        <begin position="165"/>
        <end position="168"/>
    </location>
</feature>
<feature type="strand" evidence="2">
    <location>
        <begin position="171"/>
        <end position="176"/>
    </location>
</feature>
<feature type="strand" evidence="2">
    <location>
        <begin position="180"/>
        <end position="188"/>
    </location>
</feature>
<feature type="strand" evidence="2">
    <location>
        <begin position="201"/>
        <end position="212"/>
    </location>
</feature>
<feature type="helix" evidence="2">
    <location>
        <begin position="213"/>
        <end position="225"/>
    </location>
</feature>
<feature type="turn" evidence="2">
    <location>
        <begin position="233"/>
        <end position="236"/>
    </location>
</feature>
<feature type="helix" evidence="2">
    <location>
        <begin position="237"/>
        <end position="244"/>
    </location>
</feature>
<feature type="strand" evidence="2">
    <location>
        <begin position="247"/>
        <end position="251"/>
    </location>
</feature>
<feature type="helix" evidence="2">
    <location>
        <begin position="252"/>
        <end position="255"/>
    </location>
</feature>
<feature type="helix" evidence="2">
    <location>
        <begin position="273"/>
        <end position="281"/>
    </location>
</feature>
<feature type="helix" evidence="2">
    <location>
        <begin position="282"/>
        <end position="284"/>
    </location>
</feature>
<feature type="strand" evidence="2">
    <location>
        <begin position="285"/>
        <end position="287"/>
    </location>
</feature>
<feature type="strand" evidence="3">
    <location>
        <begin position="295"/>
        <end position="297"/>
    </location>
</feature>
<feature type="strand" evidence="2">
    <location>
        <begin position="309"/>
        <end position="312"/>
    </location>
</feature>
<feature type="strand" evidence="2">
    <location>
        <begin position="314"/>
        <end position="317"/>
    </location>
</feature>
<feature type="strand" evidence="2">
    <location>
        <begin position="321"/>
        <end position="327"/>
    </location>
</feature>
<feature type="strand" evidence="2">
    <location>
        <begin position="332"/>
        <end position="335"/>
    </location>
</feature>
<feature type="strand" evidence="2">
    <location>
        <begin position="337"/>
        <end position="340"/>
    </location>
</feature>
<feature type="strand" evidence="2">
    <location>
        <begin position="354"/>
        <end position="360"/>
    </location>
</feature>
<feature type="strand" evidence="2">
    <location>
        <begin position="371"/>
        <end position="377"/>
    </location>
</feature>
<feature type="strand" evidence="2">
    <location>
        <begin position="388"/>
        <end position="391"/>
    </location>
</feature>
<feature type="helix" evidence="2">
    <location>
        <begin position="393"/>
        <end position="399"/>
    </location>
</feature>
<feature type="strand" evidence="2">
    <location>
        <begin position="400"/>
        <end position="402"/>
    </location>
</feature>
<feature type="strand" evidence="2">
    <location>
        <begin position="408"/>
        <end position="410"/>
    </location>
</feature>
<feature type="helix" evidence="2">
    <location>
        <begin position="412"/>
        <end position="416"/>
    </location>
</feature>